<keyword id="KW-0963">Cytoplasm</keyword>
<keyword id="KW-0275">Fatty acid biosynthesis</keyword>
<keyword id="KW-0276">Fatty acid metabolism</keyword>
<keyword id="KW-0444">Lipid biosynthesis</keyword>
<keyword id="KW-0443">Lipid metabolism</keyword>
<keyword id="KW-0460">Magnesium</keyword>
<keyword id="KW-0479">Metal-binding</keyword>
<keyword id="KW-0808">Transferase</keyword>
<comment type="function">
    <text evidence="1">Transfers the 4'-phosphopantetheine moiety from coenzyme A to a Ser of acyl-carrier-protein.</text>
</comment>
<comment type="catalytic activity">
    <reaction evidence="1">
        <text>apo-[ACP] + CoA = holo-[ACP] + adenosine 3',5'-bisphosphate + H(+)</text>
        <dbReference type="Rhea" id="RHEA:12068"/>
        <dbReference type="Rhea" id="RHEA-COMP:9685"/>
        <dbReference type="Rhea" id="RHEA-COMP:9690"/>
        <dbReference type="ChEBI" id="CHEBI:15378"/>
        <dbReference type="ChEBI" id="CHEBI:29999"/>
        <dbReference type="ChEBI" id="CHEBI:57287"/>
        <dbReference type="ChEBI" id="CHEBI:58343"/>
        <dbReference type="ChEBI" id="CHEBI:64479"/>
        <dbReference type="EC" id="2.7.8.7"/>
    </reaction>
</comment>
<comment type="cofactor">
    <cofactor evidence="1">
        <name>Mg(2+)</name>
        <dbReference type="ChEBI" id="CHEBI:18420"/>
    </cofactor>
</comment>
<comment type="subcellular location">
    <subcellularLocation>
        <location evidence="1">Cytoplasm</location>
    </subcellularLocation>
</comment>
<comment type="similarity">
    <text evidence="1">Belongs to the P-Pant transferase superfamily. AcpS family.</text>
</comment>
<protein>
    <recommendedName>
        <fullName evidence="1">Holo-[acyl-carrier-protein] synthase</fullName>
        <shortName evidence="1">Holo-ACP synthase</shortName>
        <ecNumber evidence="1">2.7.8.7</ecNumber>
    </recommendedName>
    <alternativeName>
        <fullName evidence="1">4'-phosphopantetheinyl transferase AcpS</fullName>
    </alternativeName>
</protein>
<dbReference type="EC" id="2.7.8.7" evidence="1"/>
<dbReference type="EMBL" id="CP001001">
    <property type="protein sequence ID" value="ACB25434.1"/>
    <property type="molecule type" value="Genomic_DNA"/>
</dbReference>
<dbReference type="RefSeq" id="WP_012320397.1">
    <property type="nucleotide sequence ID" value="NC_010505.1"/>
</dbReference>
<dbReference type="SMR" id="B1LTR5"/>
<dbReference type="STRING" id="426355.Mrad2831_3457"/>
<dbReference type="GeneID" id="6139505"/>
<dbReference type="KEGG" id="mrd:Mrad2831_3457"/>
<dbReference type="eggNOG" id="COG0736">
    <property type="taxonomic scope" value="Bacteria"/>
</dbReference>
<dbReference type="HOGENOM" id="CLU_089696_0_2_5"/>
<dbReference type="OrthoDB" id="517356at2"/>
<dbReference type="Proteomes" id="UP000006589">
    <property type="component" value="Chromosome"/>
</dbReference>
<dbReference type="GO" id="GO:0005737">
    <property type="term" value="C:cytoplasm"/>
    <property type="evidence" value="ECO:0007669"/>
    <property type="project" value="UniProtKB-SubCell"/>
</dbReference>
<dbReference type="GO" id="GO:0008897">
    <property type="term" value="F:holo-[acyl-carrier-protein] synthase activity"/>
    <property type="evidence" value="ECO:0007669"/>
    <property type="project" value="UniProtKB-UniRule"/>
</dbReference>
<dbReference type="GO" id="GO:0000287">
    <property type="term" value="F:magnesium ion binding"/>
    <property type="evidence" value="ECO:0007669"/>
    <property type="project" value="UniProtKB-UniRule"/>
</dbReference>
<dbReference type="GO" id="GO:0006633">
    <property type="term" value="P:fatty acid biosynthetic process"/>
    <property type="evidence" value="ECO:0007669"/>
    <property type="project" value="UniProtKB-UniRule"/>
</dbReference>
<dbReference type="Gene3D" id="3.90.470.20">
    <property type="entry name" value="4'-phosphopantetheinyl transferase domain"/>
    <property type="match status" value="1"/>
</dbReference>
<dbReference type="HAMAP" id="MF_00101">
    <property type="entry name" value="AcpS"/>
    <property type="match status" value="1"/>
</dbReference>
<dbReference type="InterPro" id="IPR008278">
    <property type="entry name" value="4-PPantetheinyl_Trfase_dom"/>
</dbReference>
<dbReference type="InterPro" id="IPR037143">
    <property type="entry name" value="4-PPantetheinyl_Trfase_dom_sf"/>
</dbReference>
<dbReference type="InterPro" id="IPR002582">
    <property type="entry name" value="ACPS"/>
</dbReference>
<dbReference type="InterPro" id="IPR004568">
    <property type="entry name" value="Ppantetheine-prot_Trfase_dom"/>
</dbReference>
<dbReference type="NCBIfam" id="TIGR00516">
    <property type="entry name" value="acpS"/>
    <property type="match status" value="1"/>
</dbReference>
<dbReference type="NCBIfam" id="TIGR00556">
    <property type="entry name" value="pantethn_trn"/>
    <property type="match status" value="1"/>
</dbReference>
<dbReference type="Pfam" id="PF01648">
    <property type="entry name" value="ACPS"/>
    <property type="match status" value="1"/>
</dbReference>
<dbReference type="SUPFAM" id="SSF56214">
    <property type="entry name" value="4'-phosphopantetheinyl transferase"/>
    <property type="match status" value="1"/>
</dbReference>
<reference key="1">
    <citation type="submission" date="2008-03" db="EMBL/GenBank/DDBJ databases">
        <title>Complete sequence of chromosome of Methylobacterium radiotolerans JCM 2831.</title>
        <authorList>
            <consortium name="US DOE Joint Genome Institute"/>
            <person name="Copeland A."/>
            <person name="Lucas S."/>
            <person name="Lapidus A."/>
            <person name="Glavina del Rio T."/>
            <person name="Dalin E."/>
            <person name="Tice H."/>
            <person name="Bruce D."/>
            <person name="Goodwin L."/>
            <person name="Pitluck S."/>
            <person name="Kiss H."/>
            <person name="Brettin T."/>
            <person name="Detter J.C."/>
            <person name="Han C."/>
            <person name="Kuske C.R."/>
            <person name="Schmutz J."/>
            <person name="Larimer F."/>
            <person name="Land M."/>
            <person name="Hauser L."/>
            <person name="Kyrpides N."/>
            <person name="Mikhailova N."/>
            <person name="Marx C.J."/>
            <person name="Richardson P."/>
        </authorList>
    </citation>
    <scope>NUCLEOTIDE SEQUENCE [LARGE SCALE GENOMIC DNA]</scope>
    <source>
        <strain>ATCC 27329 / DSM 1819 / JCM 2831 / NBRC 15690 / NCIMB 10815 / 0-1</strain>
    </source>
</reference>
<organism>
    <name type="scientific">Methylobacterium radiotolerans (strain ATCC 27329 / DSM 1819 / JCM 2831 / NBRC 15690 / NCIMB 10815 / 0-1)</name>
    <dbReference type="NCBI Taxonomy" id="426355"/>
    <lineage>
        <taxon>Bacteria</taxon>
        <taxon>Pseudomonadati</taxon>
        <taxon>Pseudomonadota</taxon>
        <taxon>Alphaproteobacteria</taxon>
        <taxon>Hyphomicrobiales</taxon>
        <taxon>Methylobacteriaceae</taxon>
        <taxon>Methylobacterium</taxon>
    </lineage>
</organism>
<feature type="chain" id="PRO_1000093895" description="Holo-[acyl-carrier-protein] synthase">
    <location>
        <begin position="1"/>
        <end position="136"/>
    </location>
</feature>
<feature type="binding site" evidence="1">
    <location>
        <position position="8"/>
    </location>
    <ligand>
        <name>Mg(2+)</name>
        <dbReference type="ChEBI" id="CHEBI:18420"/>
    </ligand>
</feature>
<feature type="binding site" evidence="1">
    <location>
        <position position="57"/>
    </location>
    <ligand>
        <name>Mg(2+)</name>
        <dbReference type="ChEBI" id="CHEBI:18420"/>
    </ligand>
</feature>
<sequence length="136" mass="14590">MIVGIGSDLCDIRRIARTLERHGARFTHRVFTDGERARCDRRAARAEGYARRFAAKEACAKALGTGLSAGVFWRDMEVVNLPSGQPTLRLAGGAAERLAELLPAGHAARLHVSLTDDPPMAQAFVIIEALPVSVAG</sequence>
<name>ACPS_METRJ</name>
<accession>B1LTR5</accession>
<evidence type="ECO:0000255" key="1">
    <source>
        <dbReference type="HAMAP-Rule" id="MF_00101"/>
    </source>
</evidence>
<gene>
    <name evidence="1" type="primary">acpS</name>
    <name type="ordered locus">Mrad2831_3457</name>
</gene>
<proteinExistence type="inferred from homology"/>